<accession>P0DPV3</accession>
<organism>
    <name type="scientific">Scolopendra dehaani</name>
    <name type="common">Thai centipede</name>
    <name type="synonym">Scolopendra subspinipes dehaani</name>
    <dbReference type="NCBI Taxonomy" id="2609776"/>
    <lineage>
        <taxon>Eukaryota</taxon>
        <taxon>Metazoa</taxon>
        <taxon>Ecdysozoa</taxon>
        <taxon>Arthropoda</taxon>
        <taxon>Myriapoda</taxon>
        <taxon>Chilopoda</taxon>
        <taxon>Pleurostigmophora</taxon>
        <taxon>Scolopendromorpha</taxon>
        <taxon>Scolopendridae</taxon>
        <taxon>Scolopendra</taxon>
    </lineage>
</organism>
<protein>
    <recommendedName>
        <fullName evidence="1">U-scoloptoxin(03)-Ssd1b</fullName>
        <shortName evidence="1">U-SLPTX(03)-Ssd1b</shortName>
    </recommendedName>
    <alternativeName>
        <fullName evidence="3">Toxin SSD1084</fullName>
    </alternativeName>
</protein>
<name>TX31B_SCODE</name>
<proteinExistence type="evidence at protein level"/>
<reference key="1">
    <citation type="journal article" date="2012" name="J. Proteome Res.">
        <title>Venomic and transcriptomic analysis of centipede Scolopendra subspinipes dehaani.</title>
        <authorList>
            <person name="Liu Z.C."/>
            <person name="Zhang R."/>
            <person name="Zhao F."/>
            <person name="Chen Z.M."/>
            <person name="Liu H.W."/>
            <person name="Wang Y.J."/>
            <person name="Jiang P."/>
            <person name="Zhang Y."/>
            <person name="Wu Y."/>
            <person name="Ding J.P."/>
            <person name="Lee W.H."/>
            <person name="Zhang Y."/>
        </authorList>
    </citation>
    <scope>NUCLEOTIDE SEQUENCE [MRNA]</scope>
    <scope>PROTEIN SEQUENCE OF 24-39</scope>
    <scope>SUBCELLULAR LOCATION</scope>
    <scope>MASS SPECTROMETRY</scope>
    <source>
        <tissue>Venom</tissue>
        <tissue>Venom gland</tissue>
    </source>
</reference>
<sequence length="73" mass="8283">MKSSMAVLLVMGLIIFTLDKCYSTDDKPIGKCGEKQRSKLCRVCHNRSGIDNYYSGCCIYDGTYFMCLDMLHP</sequence>
<keyword id="KW-0903">Direct protein sequencing</keyword>
<keyword id="KW-1015">Disulfide bond</keyword>
<keyword id="KW-0964">Secreted</keyword>
<keyword id="KW-0732">Signal</keyword>
<keyword id="KW-0800">Toxin</keyword>
<comment type="subcellular location">
    <subcellularLocation>
        <location evidence="2">Secreted</location>
    </subcellularLocation>
</comment>
<comment type="tissue specificity">
    <text evidence="5">Expressed by the venom gland.</text>
</comment>
<comment type="PTM">
    <text evidence="4">Contains 3 disulfide bonds.</text>
</comment>
<comment type="mass spectrometry" mass="5711.6" method="MALDI" evidence="2"/>
<comment type="similarity">
    <text evidence="4">Belongs to the scoloptoxin-03 family.</text>
</comment>
<evidence type="ECO:0000250" key="1">
    <source>
        <dbReference type="UniProtKB" id="I6RU32"/>
    </source>
</evidence>
<evidence type="ECO:0000269" key="2">
    <source>
    </source>
</evidence>
<evidence type="ECO:0000303" key="3">
    <source>
    </source>
</evidence>
<evidence type="ECO:0000305" key="4"/>
<evidence type="ECO:0000305" key="5">
    <source>
    </source>
</evidence>
<dbReference type="EMBL" id="KC145071">
    <property type="status" value="NOT_ANNOTATED_CDS"/>
    <property type="molecule type" value="mRNA"/>
</dbReference>
<dbReference type="SMR" id="P0DPV3"/>
<dbReference type="GO" id="GO:0005576">
    <property type="term" value="C:extracellular region"/>
    <property type="evidence" value="ECO:0007669"/>
    <property type="project" value="UniProtKB-SubCell"/>
</dbReference>
<dbReference type="GO" id="GO:0090729">
    <property type="term" value="F:toxin activity"/>
    <property type="evidence" value="ECO:0007669"/>
    <property type="project" value="UniProtKB-KW"/>
</dbReference>
<dbReference type="Gene3D" id="1.10.60.50">
    <property type="match status" value="1"/>
</dbReference>
<feature type="signal peptide" evidence="2">
    <location>
        <begin position="1"/>
        <end position="23"/>
    </location>
</feature>
<feature type="chain" id="PRO_0000446696" description="U-scoloptoxin(03)-Ssd1b" evidence="4">
    <location>
        <begin position="24"/>
        <end position="73"/>
    </location>
</feature>